<feature type="chain" id="PRO_0000388683" description="Phosphotriesterase-related protein">
    <location>
        <begin position="1"/>
        <end position="350"/>
    </location>
</feature>
<feature type="binding site" evidence="2">
    <location>
        <position position="24"/>
    </location>
    <ligand>
        <name>a divalent metal cation</name>
        <dbReference type="ChEBI" id="CHEBI:60240"/>
        <label>1</label>
    </ligand>
</feature>
<feature type="binding site" evidence="2">
    <location>
        <position position="26"/>
    </location>
    <ligand>
        <name>a divalent metal cation</name>
        <dbReference type="ChEBI" id="CHEBI:60240"/>
        <label>1</label>
    </ligand>
</feature>
<feature type="binding site" evidence="2">
    <location>
        <position position="170"/>
    </location>
    <ligand>
        <name>a divalent metal cation</name>
        <dbReference type="ChEBI" id="CHEBI:60240"/>
        <label>1</label>
    </ligand>
</feature>
<feature type="binding site" evidence="2">
    <location>
        <position position="170"/>
    </location>
    <ligand>
        <name>a divalent metal cation</name>
        <dbReference type="ChEBI" id="CHEBI:60240"/>
        <label>2</label>
    </ligand>
</feature>
<feature type="binding site" evidence="2">
    <location>
        <position position="202"/>
    </location>
    <ligand>
        <name>a divalent metal cation</name>
        <dbReference type="ChEBI" id="CHEBI:60240"/>
        <label>2</label>
    </ligand>
</feature>
<feature type="binding site" evidence="2">
    <location>
        <position position="231"/>
    </location>
    <ligand>
        <name>a divalent metal cation</name>
        <dbReference type="ChEBI" id="CHEBI:60240"/>
        <label>2</label>
    </ligand>
</feature>
<feature type="binding site" evidence="2">
    <location>
        <position position="299"/>
    </location>
    <ligand>
        <name>a divalent metal cation</name>
        <dbReference type="ChEBI" id="CHEBI:60240"/>
        <label>1</label>
    </ligand>
</feature>
<reference key="1">
    <citation type="journal article" date="2007" name="Science">
        <title>Sea anemone genome reveals ancestral eumetazoan gene repertoire and genomic organization.</title>
        <authorList>
            <person name="Putnam N.H."/>
            <person name="Srivastava M."/>
            <person name="Hellsten U."/>
            <person name="Dirks B."/>
            <person name="Chapman J."/>
            <person name="Salamov A."/>
            <person name="Terry A."/>
            <person name="Shapiro H."/>
            <person name="Lindquist E."/>
            <person name="Kapitonov V.V."/>
            <person name="Jurka J."/>
            <person name="Genikhovich G."/>
            <person name="Grigoriev I.V."/>
            <person name="Lucas S.M."/>
            <person name="Steele R.E."/>
            <person name="Finnerty J.R."/>
            <person name="Technau U."/>
            <person name="Martindale M.Q."/>
            <person name="Rokhsar D.S."/>
        </authorList>
    </citation>
    <scope>NUCLEOTIDE SEQUENCE [LARGE SCALE GENOMIC DNA]</scope>
    <source>
        <strain>CH2 X CH6</strain>
    </source>
</reference>
<organism>
    <name type="scientific">Nematostella vectensis</name>
    <name type="common">Starlet sea anemone</name>
    <dbReference type="NCBI Taxonomy" id="45351"/>
    <lineage>
        <taxon>Eukaryota</taxon>
        <taxon>Metazoa</taxon>
        <taxon>Cnidaria</taxon>
        <taxon>Anthozoa</taxon>
        <taxon>Hexacorallia</taxon>
        <taxon>Actiniaria</taxon>
        <taxon>Edwardsiidae</taxon>
        <taxon>Nematostella</taxon>
    </lineage>
</organism>
<accession>A7RFA1</accession>
<protein>
    <recommendedName>
        <fullName>Phosphotriesterase-related protein</fullName>
        <ecNumber>3.1.-.-</ecNumber>
    </recommendedName>
    <alternativeName>
        <fullName>Parathion hydrolase-related protein</fullName>
    </alternativeName>
</protein>
<name>PTER_NEMVE</name>
<dbReference type="EC" id="3.1.-.-"/>
<dbReference type="EMBL" id="DS469507">
    <property type="protein sequence ID" value="EDO49918.1"/>
    <property type="molecule type" value="Genomic_DNA"/>
</dbReference>
<dbReference type="SMR" id="A7RFA1"/>
<dbReference type="STRING" id="45351.A7RFA1"/>
<dbReference type="EnsemblMetazoa" id="EDO49918">
    <property type="protein sequence ID" value="EDO49918"/>
    <property type="gene ID" value="NEMVEDRAFT_v1g177083"/>
</dbReference>
<dbReference type="KEGG" id="nve:5522237"/>
<dbReference type="eggNOG" id="ENOG502QQQR">
    <property type="taxonomic scope" value="Eukaryota"/>
</dbReference>
<dbReference type="HOGENOM" id="CLU_054760_0_1_1"/>
<dbReference type="InParanoid" id="A7RFA1"/>
<dbReference type="OMA" id="MVKCGFI"/>
<dbReference type="OrthoDB" id="9998343at2759"/>
<dbReference type="PhylomeDB" id="A7RFA1"/>
<dbReference type="Proteomes" id="UP000001593">
    <property type="component" value="Unassembled WGS sequence"/>
</dbReference>
<dbReference type="GO" id="GO:0016787">
    <property type="term" value="F:hydrolase activity"/>
    <property type="evidence" value="ECO:0007669"/>
    <property type="project" value="UniProtKB-KW"/>
</dbReference>
<dbReference type="GO" id="GO:0008270">
    <property type="term" value="F:zinc ion binding"/>
    <property type="evidence" value="ECO:0007669"/>
    <property type="project" value="InterPro"/>
</dbReference>
<dbReference type="GO" id="GO:0009056">
    <property type="term" value="P:catabolic process"/>
    <property type="evidence" value="ECO:0007669"/>
    <property type="project" value="InterPro"/>
</dbReference>
<dbReference type="CDD" id="cd00530">
    <property type="entry name" value="PTE"/>
    <property type="match status" value="1"/>
</dbReference>
<dbReference type="Gene3D" id="3.20.20.140">
    <property type="entry name" value="Metal-dependent hydrolases"/>
    <property type="match status" value="1"/>
</dbReference>
<dbReference type="InterPro" id="IPR032466">
    <property type="entry name" value="Metal_Hydrolase"/>
</dbReference>
<dbReference type="InterPro" id="IPR001559">
    <property type="entry name" value="Phosphotriesterase"/>
</dbReference>
<dbReference type="PANTHER" id="PTHR10819">
    <property type="entry name" value="PHOSPHOTRIESTERASE-RELATED"/>
    <property type="match status" value="1"/>
</dbReference>
<dbReference type="PANTHER" id="PTHR10819:SF3">
    <property type="entry name" value="PHOSPHOTRIESTERASE-RELATED PROTEIN"/>
    <property type="match status" value="1"/>
</dbReference>
<dbReference type="Pfam" id="PF02126">
    <property type="entry name" value="PTE"/>
    <property type="match status" value="1"/>
</dbReference>
<dbReference type="SUPFAM" id="SSF51556">
    <property type="entry name" value="Metallo-dependent hydrolases"/>
    <property type="match status" value="1"/>
</dbReference>
<dbReference type="PROSITE" id="PS51347">
    <property type="entry name" value="PHOSPHOTRIESTERASE_2"/>
    <property type="match status" value="1"/>
</dbReference>
<sequence length="350" mass="39308">MTSGMAQTVCGLLQPQKLGRTLTHEHMVMDYKSCYFKPSREQDLHLCSKKEITMQNLYWLRQNPYSNAFNLSLGDEPLEEIIAEVAEFKKEGGSTIVDNTTYGIMRNVEALKKISMATDVNIICGTGYYLDHTLPPEIKNAPIEELTQKMVNELTVGVEGTNIKCGVIGEVGCSWPLTPIEKKSLQASAAAQAETGAPLIIHPGRDESAPEEIIRILQEAGGDISRTVMSHTDRTIFNRSKLVELAATGCYVEWDLFGMETLFYQANLASDMPSDSQRIQDIKFLLDEGYEDKIVIAHDIHTRHRLKKYGGHGYAHIMVDIVPKMLMRGVTQEQIDKIQIANPRTWLTFK</sequence>
<evidence type="ECO:0000250" key="1"/>
<evidence type="ECO:0000250" key="2">
    <source>
        <dbReference type="UniProtKB" id="P45548"/>
    </source>
</evidence>
<evidence type="ECO:0000255" key="3">
    <source>
        <dbReference type="PROSITE-ProRule" id="PRU00679"/>
    </source>
</evidence>
<keyword id="KW-0378">Hydrolase</keyword>
<keyword id="KW-0479">Metal-binding</keyword>
<keyword id="KW-1185">Reference proteome</keyword>
<gene>
    <name type="ORF">v1g177083</name>
</gene>
<proteinExistence type="inferred from homology"/>
<comment type="cofactor">
    <cofactor evidence="1">
        <name>a divalent metal cation</name>
        <dbReference type="ChEBI" id="CHEBI:60240"/>
    </cofactor>
    <text evidence="1">Binds 2 divalent metal cations per subunit.</text>
</comment>
<comment type="similarity">
    <text evidence="3">Belongs to the metallo-dependent hydrolases superfamily. Phosphotriesterase family.</text>
</comment>